<gene>
    <name evidence="1" type="primary">glpK</name>
    <name type="ordered locus">XCV0372</name>
</gene>
<sequence length="499" mass="54818">MEKQYVLAIDQGTTSSRAMLFDRQGKVAGVAQREFGQIFPQPGWVEHNPREIMTSVYTTITELLNNAQIDARAIAGIGITNQRETAVVWDKATGQPIYNAIVWQSRQTKDICTQLKEAGHEQMVREKTGLLIDAYFSGTKVKWILDHVEGARERAQKGELAFGTIDSWLIWNLTGGKVHVTDYTNASRTMMFNIHTLEWDAELLAMLDVPAQMLPDVRSSSEIYGMTQTQYFYGEQVPIAGIAGDQQAALFGQACFEPGMAKNTYGTGCFMLMNTGDKAVASKAGLLTTIAWGIDGKVEYALEGAIFVAGSVVQWLRDGLRMLGKASDSQAYAERAGDNDGVYIVPAFVGLGAPYWRSDIRGAVFGLTRGTTKEHFVRAAVESMAYQTRDVLTAMQSDSGIELKELRADGGAIANDFMAQFQSDILNVPVLRPEVAETTALGAAYLAGLATGFWGSREEIAKQWAVDRRFEPAMADDKRQGLYAGWQQAVEATMGFRIS</sequence>
<feature type="chain" id="PRO_1000020811" description="Glycerol kinase">
    <location>
        <begin position="1"/>
        <end position="499"/>
    </location>
</feature>
<feature type="binding site" evidence="1">
    <location>
        <position position="13"/>
    </location>
    <ligand>
        <name>ADP</name>
        <dbReference type="ChEBI" id="CHEBI:456216"/>
    </ligand>
</feature>
<feature type="binding site" evidence="1">
    <location>
        <position position="13"/>
    </location>
    <ligand>
        <name>ATP</name>
        <dbReference type="ChEBI" id="CHEBI:30616"/>
    </ligand>
</feature>
<feature type="binding site" evidence="1">
    <location>
        <position position="13"/>
    </location>
    <ligand>
        <name>sn-glycerol 3-phosphate</name>
        <dbReference type="ChEBI" id="CHEBI:57597"/>
    </ligand>
</feature>
<feature type="binding site" evidence="1">
    <location>
        <position position="14"/>
    </location>
    <ligand>
        <name>ATP</name>
        <dbReference type="ChEBI" id="CHEBI:30616"/>
    </ligand>
</feature>
<feature type="binding site" evidence="1">
    <location>
        <position position="15"/>
    </location>
    <ligand>
        <name>ATP</name>
        <dbReference type="ChEBI" id="CHEBI:30616"/>
    </ligand>
</feature>
<feature type="binding site" evidence="1">
    <location>
        <position position="17"/>
    </location>
    <ligand>
        <name>ADP</name>
        <dbReference type="ChEBI" id="CHEBI:456216"/>
    </ligand>
</feature>
<feature type="binding site" evidence="1">
    <location>
        <position position="83"/>
    </location>
    <ligand>
        <name>glycerol</name>
        <dbReference type="ChEBI" id="CHEBI:17754"/>
    </ligand>
</feature>
<feature type="binding site" evidence="1">
    <location>
        <position position="83"/>
    </location>
    <ligand>
        <name>sn-glycerol 3-phosphate</name>
        <dbReference type="ChEBI" id="CHEBI:57597"/>
    </ligand>
</feature>
<feature type="binding site" evidence="1">
    <location>
        <position position="84"/>
    </location>
    <ligand>
        <name>glycerol</name>
        <dbReference type="ChEBI" id="CHEBI:17754"/>
    </ligand>
</feature>
<feature type="binding site" evidence="1">
    <location>
        <position position="84"/>
    </location>
    <ligand>
        <name>sn-glycerol 3-phosphate</name>
        <dbReference type="ChEBI" id="CHEBI:57597"/>
    </ligand>
</feature>
<feature type="binding site" evidence="1">
    <location>
        <position position="135"/>
    </location>
    <ligand>
        <name>glycerol</name>
        <dbReference type="ChEBI" id="CHEBI:17754"/>
    </ligand>
</feature>
<feature type="binding site" evidence="1">
    <location>
        <position position="135"/>
    </location>
    <ligand>
        <name>sn-glycerol 3-phosphate</name>
        <dbReference type="ChEBI" id="CHEBI:57597"/>
    </ligand>
</feature>
<feature type="binding site" evidence="1">
    <location>
        <position position="245"/>
    </location>
    <ligand>
        <name>glycerol</name>
        <dbReference type="ChEBI" id="CHEBI:17754"/>
    </ligand>
</feature>
<feature type="binding site" evidence="1">
    <location>
        <position position="245"/>
    </location>
    <ligand>
        <name>sn-glycerol 3-phosphate</name>
        <dbReference type="ChEBI" id="CHEBI:57597"/>
    </ligand>
</feature>
<feature type="binding site" evidence="1">
    <location>
        <position position="246"/>
    </location>
    <ligand>
        <name>glycerol</name>
        <dbReference type="ChEBI" id="CHEBI:17754"/>
    </ligand>
</feature>
<feature type="binding site" evidence="1">
    <location>
        <position position="267"/>
    </location>
    <ligand>
        <name>ADP</name>
        <dbReference type="ChEBI" id="CHEBI:456216"/>
    </ligand>
</feature>
<feature type="binding site" evidence="1">
    <location>
        <position position="267"/>
    </location>
    <ligand>
        <name>ATP</name>
        <dbReference type="ChEBI" id="CHEBI:30616"/>
    </ligand>
</feature>
<feature type="binding site" evidence="1">
    <location>
        <position position="310"/>
    </location>
    <ligand>
        <name>ADP</name>
        <dbReference type="ChEBI" id="CHEBI:456216"/>
    </ligand>
</feature>
<feature type="binding site" evidence="1">
    <location>
        <position position="310"/>
    </location>
    <ligand>
        <name>ATP</name>
        <dbReference type="ChEBI" id="CHEBI:30616"/>
    </ligand>
</feature>
<feature type="binding site" evidence="1">
    <location>
        <position position="314"/>
    </location>
    <ligand>
        <name>ATP</name>
        <dbReference type="ChEBI" id="CHEBI:30616"/>
    </ligand>
</feature>
<feature type="binding site" evidence="1">
    <location>
        <position position="411"/>
    </location>
    <ligand>
        <name>ADP</name>
        <dbReference type="ChEBI" id="CHEBI:456216"/>
    </ligand>
</feature>
<feature type="binding site" evidence="1">
    <location>
        <position position="411"/>
    </location>
    <ligand>
        <name>ATP</name>
        <dbReference type="ChEBI" id="CHEBI:30616"/>
    </ligand>
</feature>
<feature type="binding site" evidence="1">
    <location>
        <position position="415"/>
    </location>
    <ligand>
        <name>ADP</name>
        <dbReference type="ChEBI" id="CHEBI:456216"/>
    </ligand>
</feature>
<dbReference type="EC" id="2.7.1.30" evidence="1"/>
<dbReference type="EMBL" id="AM039952">
    <property type="protein sequence ID" value="CAJ22003.1"/>
    <property type="molecule type" value="Genomic_DNA"/>
</dbReference>
<dbReference type="RefSeq" id="WP_011346063.1">
    <property type="nucleotide sequence ID" value="NZ_CP017190.1"/>
</dbReference>
<dbReference type="SMR" id="Q3BYR0"/>
<dbReference type="STRING" id="456327.BJD11_21010"/>
<dbReference type="KEGG" id="xcv:XCV0372"/>
<dbReference type="eggNOG" id="COG0554">
    <property type="taxonomic scope" value="Bacteria"/>
</dbReference>
<dbReference type="HOGENOM" id="CLU_009281_2_3_6"/>
<dbReference type="UniPathway" id="UPA00618">
    <property type="reaction ID" value="UER00672"/>
</dbReference>
<dbReference type="Proteomes" id="UP000007069">
    <property type="component" value="Chromosome"/>
</dbReference>
<dbReference type="GO" id="GO:0005829">
    <property type="term" value="C:cytosol"/>
    <property type="evidence" value="ECO:0007669"/>
    <property type="project" value="TreeGrafter"/>
</dbReference>
<dbReference type="GO" id="GO:0005524">
    <property type="term" value="F:ATP binding"/>
    <property type="evidence" value="ECO:0007669"/>
    <property type="project" value="UniProtKB-UniRule"/>
</dbReference>
<dbReference type="GO" id="GO:0004370">
    <property type="term" value="F:glycerol kinase activity"/>
    <property type="evidence" value="ECO:0000250"/>
    <property type="project" value="UniProtKB"/>
</dbReference>
<dbReference type="GO" id="GO:0019563">
    <property type="term" value="P:glycerol catabolic process"/>
    <property type="evidence" value="ECO:0007669"/>
    <property type="project" value="UniProtKB-UniRule"/>
</dbReference>
<dbReference type="GO" id="GO:0006071">
    <property type="term" value="P:glycerol metabolic process"/>
    <property type="evidence" value="ECO:0000250"/>
    <property type="project" value="UniProtKB"/>
</dbReference>
<dbReference type="GO" id="GO:0006072">
    <property type="term" value="P:glycerol-3-phosphate metabolic process"/>
    <property type="evidence" value="ECO:0007669"/>
    <property type="project" value="InterPro"/>
</dbReference>
<dbReference type="CDD" id="cd07786">
    <property type="entry name" value="FGGY_EcGK_like"/>
    <property type="match status" value="1"/>
</dbReference>
<dbReference type="FunFam" id="3.30.420.40:FF:000007">
    <property type="entry name" value="Glycerol kinase"/>
    <property type="match status" value="1"/>
</dbReference>
<dbReference type="FunFam" id="3.30.420.40:FF:000008">
    <property type="entry name" value="Glycerol kinase"/>
    <property type="match status" value="1"/>
</dbReference>
<dbReference type="Gene3D" id="3.30.420.40">
    <property type="match status" value="2"/>
</dbReference>
<dbReference type="HAMAP" id="MF_00186">
    <property type="entry name" value="Glycerol_kin"/>
    <property type="match status" value="1"/>
</dbReference>
<dbReference type="InterPro" id="IPR043129">
    <property type="entry name" value="ATPase_NBD"/>
</dbReference>
<dbReference type="InterPro" id="IPR000577">
    <property type="entry name" value="Carb_kinase_FGGY"/>
</dbReference>
<dbReference type="InterPro" id="IPR018483">
    <property type="entry name" value="Carb_kinase_FGGY_CS"/>
</dbReference>
<dbReference type="InterPro" id="IPR018485">
    <property type="entry name" value="FGGY_C"/>
</dbReference>
<dbReference type="InterPro" id="IPR018484">
    <property type="entry name" value="FGGY_N"/>
</dbReference>
<dbReference type="InterPro" id="IPR005999">
    <property type="entry name" value="Glycerol_kin"/>
</dbReference>
<dbReference type="NCBIfam" id="TIGR01311">
    <property type="entry name" value="glycerol_kin"/>
    <property type="match status" value="1"/>
</dbReference>
<dbReference type="NCBIfam" id="NF000756">
    <property type="entry name" value="PRK00047.1"/>
    <property type="match status" value="1"/>
</dbReference>
<dbReference type="PANTHER" id="PTHR10196:SF69">
    <property type="entry name" value="GLYCEROL KINASE"/>
    <property type="match status" value="1"/>
</dbReference>
<dbReference type="PANTHER" id="PTHR10196">
    <property type="entry name" value="SUGAR KINASE"/>
    <property type="match status" value="1"/>
</dbReference>
<dbReference type="Pfam" id="PF02782">
    <property type="entry name" value="FGGY_C"/>
    <property type="match status" value="1"/>
</dbReference>
<dbReference type="Pfam" id="PF00370">
    <property type="entry name" value="FGGY_N"/>
    <property type="match status" value="1"/>
</dbReference>
<dbReference type="PIRSF" id="PIRSF000538">
    <property type="entry name" value="GlpK"/>
    <property type="match status" value="1"/>
</dbReference>
<dbReference type="SUPFAM" id="SSF53067">
    <property type="entry name" value="Actin-like ATPase domain"/>
    <property type="match status" value="2"/>
</dbReference>
<dbReference type="PROSITE" id="PS00933">
    <property type="entry name" value="FGGY_KINASES_1"/>
    <property type="match status" value="1"/>
</dbReference>
<dbReference type="PROSITE" id="PS00445">
    <property type="entry name" value="FGGY_KINASES_2"/>
    <property type="match status" value="1"/>
</dbReference>
<accession>Q3BYR0</accession>
<name>GLPK_XANE5</name>
<proteinExistence type="inferred from homology"/>
<reference key="1">
    <citation type="journal article" date="2005" name="J. Bacteriol.">
        <title>Insights into genome plasticity and pathogenicity of the plant pathogenic Bacterium Xanthomonas campestris pv. vesicatoria revealed by the complete genome sequence.</title>
        <authorList>
            <person name="Thieme F."/>
            <person name="Koebnik R."/>
            <person name="Bekel T."/>
            <person name="Berger C."/>
            <person name="Boch J."/>
            <person name="Buettner D."/>
            <person name="Caldana C."/>
            <person name="Gaigalat L."/>
            <person name="Goesmann A."/>
            <person name="Kay S."/>
            <person name="Kirchner O."/>
            <person name="Lanz C."/>
            <person name="Linke B."/>
            <person name="McHardy A.C."/>
            <person name="Meyer F."/>
            <person name="Mittenhuber G."/>
            <person name="Nies D.H."/>
            <person name="Niesbach-Kloesgen U."/>
            <person name="Patschkowski T."/>
            <person name="Rueckert C."/>
            <person name="Rupp O."/>
            <person name="Schneiker S."/>
            <person name="Schuster S.C."/>
            <person name="Vorhoelter F.J."/>
            <person name="Weber E."/>
            <person name="Puehler A."/>
            <person name="Bonas U."/>
            <person name="Bartels D."/>
            <person name="Kaiser O."/>
        </authorList>
    </citation>
    <scope>NUCLEOTIDE SEQUENCE [LARGE SCALE GENOMIC DNA]</scope>
    <source>
        <strain>85-10</strain>
    </source>
</reference>
<comment type="function">
    <text evidence="1">Key enzyme in the regulation of glycerol uptake and metabolism. Catalyzes the phosphorylation of glycerol to yield sn-glycerol 3-phosphate.</text>
</comment>
<comment type="catalytic activity">
    <reaction evidence="1">
        <text>glycerol + ATP = sn-glycerol 3-phosphate + ADP + H(+)</text>
        <dbReference type="Rhea" id="RHEA:21644"/>
        <dbReference type="ChEBI" id="CHEBI:15378"/>
        <dbReference type="ChEBI" id="CHEBI:17754"/>
        <dbReference type="ChEBI" id="CHEBI:30616"/>
        <dbReference type="ChEBI" id="CHEBI:57597"/>
        <dbReference type="ChEBI" id="CHEBI:456216"/>
        <dbReference type="EC" id="2.7.1.30"/>
    </reaction>
</comment>
<comment type="activity regulation">
    <text evidence="1">Inhibited by fructose 1,6-bisphosphate (FBP).</text>
</comment>
<comment type="pathway">
    <text evidence="1">Polyol metabolism; glycerol degradation via glycerol kinase pathway; sn-glycerol 3-phosphate from glycerol: step 1/1.</text>
</comment>
<comment type="similarity">
    <text evidence="1">Belongs to the FGGY kinase family.</text>
</comment>
<keyword id="KW-0067">ATP-binding</keyword>
<keyword id="KW-0319">Glycerol metabolism</keyword>
<keyword id="KW-0418">Kinase</keyword>
<keyword id="KW-0547">Nucleotide-binding</keyword>
<keyword id="KW-0808">Transferase</keyword>
<protein>
    <recommendedName>
        <fullName evidence="1">Glycerol kinase</fullName>
        <ecNumber evidence="1">2.7.1.30</ecNumber>
    </recommendedName>
    <alternativeName>
        <fullName evidence="1">ATP:glycerol 3-phosphotransferase</fullName>
    </alternativeName>
    <alternativeName>
        <fullName evidence="1">Glycerokinase</fullName>
        <shortName evidence="1">GK</shortName>
    </alternativeName>
</protein>
<evidence type="ECO:0000255" key="1">
    <source>
        <dbReference type="HAMAP-Rule" id="MF_00186"/>
    </source>
</evidence>
<organism>
    <name type="scientific">Xanthomonas euvesicatoria pv. vesicatoria (strain 85-10)</name>
    <name type="common">Xanthomonas campestris pv. vesicatoria</name>
    <dbReference type="NCBI Taxonomy" id="316273"/>
    <lineage>
        <taxon>Bacteria</taxon>
        <taxon>Pseudomonadati</taxon>
        <taxon>Pseudomonadota</taxon>
        <taxon>Gammaproteobacteria</taxon>
        <taxon>Lysobacterales</taxon>
        <taxon>Lysobacteraceae</taxon>
        <taxon>Xanthomonas</taxon>
    </lineage>
</organism>